<comment type="function">
    <text>Core component of nucleosome. Nucleosomes wrap and compact DNA into chromatin, limiting DNA accessibility to the cellular machineries which require DNA as a template. Histones thereby play a central role in transcription regulation, DNA repair, DNA replication and chromosomal stability. DNA accessibility is regulated via a complex set of post-translational modifications of histones, also called histone code, and nucleosome remodeling.</text>
</comment>
<comment type="subunit">
    <text>The nucleosome is a histone octamer containing two molecules each of H2A, H2B, H3 and H4 assembled in one H3-H4 heterotetramer and two H2A-H2B heterodimers. The octamer wraps approximately 147 bp of DNA.</text>
</comment>
<comment type="subcellular location">
    <subcellularLocation>
        <location evidence="1">Nucleus</location>
    </subcellularLocation>
    <subcellularLocation>
        <location evidence="1">Chromosome</location>
    </subcellularLocation>
</comment>
<comment type="PTM">
    <text evidence="1">Monoubiquitination of Lys-120 (H2AXK119ub) gives a specific tag for epigenetic transcriptional repression. Following DNA double-strand breaks (DSBs), it is ubiquitinated through 'Lys-63' linkage of ubiquitin moieties (By similarity).</text>
</comment>
<comment type="PTM">
    <text evidence="1">Glutamine methylation at Gln-105 (H2AQ104me) by FBL is specifically dedicated to polymerase I. It is present at 35S ribosomal DNA locus and impairs binding of the FACT complex (By similarity).</text>
</comment>
<comment type="PTM">
    <text evidence="1">Phosphorylation on Ser-2 (H2AS1ph) is enhanced during mitosis. Phosphorylation on Ser-2 by RPS6KA5/MSK1 directly represses transcription. Acetylation of H3 inhibits Ser-2 phosphorylation by RPS6KA5/MSK1. Phosphorylation at Thr-121 (H2AT120ph) by DCAF1 is present in the regulatory region of many tumor suppresor genes and down-regulates their transcription (By similarity).</text>
</comment>
<comment type="similarity">
    <text evidence="5">Belongs to the histone H2A family.</text>
</comment>
<proteinExistence type="evidence at transcript level"/>
<gene>
    <name evidence="6" type="primary">H2aj</name>
</gene>
<name>H2AJ_RAT</name>
<sequence length="129" mass="14045">MSGRGKQGGKVRAKAKSRSSRAGLQFPVGRVHRLLRKGNYAERVGAGAPVYLAAVLEYLTAEILELAGNAARDNKKTRIIPRHLQLAIRNDEELNKLLGRVTIAQGGVLPNIQAVLLPKKTESQKVKSK</sequence>
<feature type="initiator methionine" description="Removed" evidence="5">
    <location>
        <position position="1"/>
    </location>
</feature>
<feature type="chain" id="PRO_0000344250" description="Histone H2A.J">
    <location>
        <begin position="2"/>
        <end position="129"/>
    </location>
</feature>
<feature type="region of interest" description="Disordered" evidence="4">
    <location>
        <begin position="1"/>
        <end position="22"/>
    </location>
</feature>
<feature type="compositionally biased region" description="Basic residues" evidence="4">
    <location>
        <begin position="7"/>
        <end position="19"/>
    </location>
</feature>
<feature type="modified residue" description="N6-acetyllysine" evidence="3">
    <location>
        <position position="6"/>
    </location>
</feature>
<feature type="modified residue" description="N6-acetyllysine" evidence="3">
    <location>
        <position position="10"/>
    </location>
</feature>
<feature type="modified residue" description="N6-lactoyllysine; alternate" evidence="2">
    <location>
        <position position="10"/>
    </location>
</feature>
<feature type="modified residue" description="N5-methylglutamine" evidence="1">
    <location>
        <position position="105"/>
    </location>
</feature>
<feature type="modified residue" description="Phosphothreonine; by DCAF1" evidence="1">
    <location>
        <position position="121"/>
    </location>
</feature>
<evidence type="ECO:0000250" key="1"/>
<evidence type="ECO:0000250" key="2">
    <source>
        <dbReference type="UniProtKB" id="P0C0S5"/>
    </source>
</evidence>
<evidence type="ECO:0000250" key="3">
    <source>
        <dbReference type="UniProtKB" id="Q8R1M2"/>
    </source>
</evidence>
<evidence type="ECO:0000256" key="4">
    <source>
        <dbReference type="SAM" id="MobiDB-lite"/>
    </source>
</evidence>
<evidence type="ECO:0000305" key="5"/>
<evidence type="ECO:0000312" key="6">
    <source>
        <dbReference type="RGD" id="1592176"/>
    </source>
</evidence>
<accession>A9UMV8</accession>
<protein>
    <recommendedName>
        <fullName>Histone H2A.J</fullName>
        <shortName>H2a/j</shortName>
    </recommendedName>
</protein>
<organism>
    <name type="scientific">Rattus norvegicus</name>
    <name type="common">Rat</name>
    <dbReference type="NCBI Taxonomy" id="10116"/>
    <lineage>
        <taxon>Eukaryota</taxon>
        <taxon>Metazoa</taxon>
        <taxon>Chordata</taxon>
        <taxon>Craniata</taxon>
        <taxon>Vertebrata</taxon>
        <taxon>Euteleostomi</taxon>
        <taxon>Mammalia</taxon>
        <taxon>Eutheria</taxon>
        <taxon>Euarchontoglires</taxon>
        <taxon>Glires</taxon>
        <taxon>Rodentia</taxon>
        <taxon>Myomorpha</taxon>
        <taxon>Muroidea</taxon>
        <taxon>Muridae</taxon>
        <taxon>Murinae</taxon>
        <taxon>Rattus</taxon>
    </lineage>
</organism>
<reference key="1">
    <citation type="submission" date="2005-09" db="EMBL/GenBank/DDBJ databases">
        <authorList>
            <person name="Mural R.J."/>
            <person name="Adams M.D."/>
            <person name="Myers E.W."/>
            <person name="Smith H.O."/>
            <person name="Venter J.C."/>
        </authorList>
    </citation>
    <scope>NUCLEOTIDE SEQUENCE [LARGE SCALE GENOMIC DNA]</scope>
    <source>
        <strain>Brown Norway</strain>
    </source>
</reference>
<reference key="2">
    <citation type="journal article" date="2004" name="Genome Res.">
        <title>The status, quality, and expansion of the NIH full-length cDNA project: the Mammalian Gene Collection (MGC).</title>
        <authorList>
            <consortium name="The MGC Project Team"/>
        </authorList>
    </citation>
    <scope>NUCLEOTIDE SEQUENCE [LARGE SCALE MRNA]</scope>
    <source>
        <tissue>Heart</tissue>
    </source>
</reference>
<keyword id="KW-0007">Acetylation</keyword>
<keyword id="KW-0158">Chromosome</keyword>
<keyword id="KW-0238">DNA-binding</keyword>
<keyword id="KW-1017">Isopeptide bond</keyword>
<keyword id="KW-0488">Methylation</keyword>
<keyword id="KW-0544">Nucleosome core</keyword>
<keyword id="KW-0539">Nucleus</keyword>
<keyword id="KW-0597">Phosphoprotein</keyword>
<keyword id="KW-1185">Reference proteome</keyword>
<keyword id="KW-0832">Ubl conjugation</keyword>
<dbReference type="EMBL" id="CH473964">
    <property type="protein sequence ID" value="EDM01605.1"/>
    <property type="molecule type" value="Genomic_DNA"/>
</dbReference>
<dbReference type="EMBL" id="BC157816">
    <property type="protein sequence ID" value="AAI57817.1"/>
    <property type="molecule type" value="mRNA"/>
</dbReference>
<dbReference type="RefSeq" id="NP_001103080.1">
    <property type="nucleotide sequence ID" value="NM_001109610.2"/>
</dbReference>
<dbReference type="RefSeq" id="XP_008761669.1">
    <property type="nucleotide sequence ID" value="XM_008763447.2"/>
</dbReference>
<dbReference type="SMR" id="A9UMV8"/>
<dbReference type="BioGRID" id="605606">
    <property type="interactions" value="2"/>
</dbReference>
<dbReference type="FunCoup" id="A9UMV8">
    <property type="interactions" value="1030"/>
</dbReference>
<dbReference type="IntAct" id="A9UMV8">
    <property type="interactions" value="1"/>
</dbReference>
<dbReference type="MINT" id="A9UMV8"/>
<dbReference type="STRING" id="10116.ENSRNOP00000044986"/>
<dbReference type="iPTMnet" id="A9UMV8"/>
<dbReference type="PhosphoSitePlus" id="A9UMV8"/>
<dbReference type="jPOST" id="A9UMV8"/>
<dbReference type="PaxDb" id="10116-ENSRNOP00000044986"/>
<dbReference type="PeptideAtlas" id="A9UMV8"/>
<dbReference type="GeneID" id="690795"/>
<dbReference type="KEGG" id="rno:690795"/>
<dbReference type="UCSC" id="RGD:1592176">
    <property type="organism name" value="rat"/>
</dbReference>
<dbReference type="AGR" id="RGD:1592176"/>
<dbReference type="CTD" id="55766"/>
<dbReference type="RGD" id="1592176">
    <property type="gene designation" value="H2aj"/>
</dbReference>
<dbReference type="VEuPathDB" id="HostDB:ENSRNOG00000045819"/>
<dbReference type="eggNOG" id="KOG1756">
    <property type="taxonomic scope" value="Eukaryota"/>
</dbReference>
<dbReference type="HOGENOM" id="CLU_062828_3_1_1"/>
<dbReference type="InParanoid" id="A9UMV8"/>
<dbReference type="OrthoDB" id="56925at9989"/>
<dbReference type="PhylomeDB" id="A9UMV8"/>
<dbReference type="TreeFam" id="TF300137"/>
<dbReference type="Reactome" id="R-RNO-110330">
    <property type="pathway name" value="Recognition and association of DNA glycosylase with site containing an affected purine"/>
</dbReference>
<dbReference type="Reactome" id="R-RNO-110331">
    <property type="pathway name" value="Cleavage of the damaged purine"/>
</dbReference>
<dbReference type="Reactome" id="R-RNO-212300">
    <property type="pathway name" value="PRC2 methylates histones and DNA"/>
</dbReference>
<dbReference type="Reactome" id="R-RNO-2299718">
    <property type="pathway name" value="Condensation of Prophase Chromosomes"/>
</dbReference>
<dbReference type="Reactome" id="R-RNO-2559580">
    <property type="pathway name" value="Oxidative Stress Induced Senescence"/>
</dbReference>
<dbReference type="Reactome" id="R-RNO-2559582">
    <property type="pathway name" value="Senescence-Associated Secretory Phenotype (SASP)"/>
</dbReference>
<dbReference type="Reactome" id="R-RNO-2559586">
    <property type="pathway name" value="DNA Damage/Telomere Stress Induced Senescence"/>
</dbReference>
<dbReference type="Reactome" id="R-RNO-3214858">
    <property type="pathway name" value="RMTs methylate histone arginines"/>
</dbReference>
<dbReference type="Reactome" id="R-RNO-427359">
    <property type="pathway name" value="SIRT1 negatively regulates rRNA expression"/>
</dbReference>
<dbReference type="Reactome" id="R-RNO-427413">
    <property type="pathway name" value="NoRC negatively regulates rRNA expression"/>
</dbReference>
<dbReference type="Reactome" id="R-RNO-5250924">
    <property type="pathway name" value="B-WICH complex positively regulates rRNA expression"/>
</dbReference>
<dbReference type="Reactome" id="R-RNO-5578749">
    <property type="pathway name" value="Transcriptional regulation by small RNAs"/>
</dbReference>
<dbReference type="Reactome" id="R-RNO-5625886">
    <property type="pathway name" value="Activated PKN1 stimulates transcription of AR (androgen receptor) regulated genes KLK2 and KLK3"/>
</dbReference>
<dbReference type="Reactome" id="R-RNO-5689603">
    <property type="pathway name" value="UCH proteinases"/>
</dbReference>
<dbReference type="Reactome" id="R-RNO-5689880">
    <property type="pathway name" value="Ub-specific processing proteases"/>
</dbReference>
<dbReference type="Reactome" id="R-RNO-5689901">
    <property type="pathway name" value="Metalloprotease DUBs"/>
</dbReference>
<dbReference type="Reactome" id="R-RNO-606279">
    <property type="pathway name" value="Deposition of new CENPA-containing nucleosomes at the centromere"/>
</dbReference>
<dbReference type="Reactome" id="R-RNO-68616">
    <property type="pathway name" value="Assembly of the ORC complex at the origin of replication"/>
</dbReference>
<dbReference type="Reactome" id="R-RNO-73728">
    <property type="pathway name" value="RNA Polymerase I Promoter Opening"/>
</dbReference>
<dbReference type="Reactome" id="R-RNO-73772">
    <property type="pathway name" value="RNA Polymerase I Promoter Escape"/>
</dbReference>
<dbReference type="Reactome" id="R-RNO-8936459">
    <property type="pathway name" value="RUNX1 regulates genes involved in megakaryocyte differentiation and platelet function"/>
</dbReference>
<dbReference type="Reactome" id="R-RNO-9018519">
    <property type="pathway name" value="Estrogen-dependent gene expression"/>
</dbReference>
<dbReference type="Reactome" id="R-RNO-9841922">
    <property type="pathway name" value="MLL4 and MLL3 complexes regulate expression of PPARG target genes in adipogenesis and hepatic steatosis"/>
</dbReference>
<dbReference type="Reactome" id="R-RNO-9843940">
    <property type="pathway name" value="Regulation of endogenous retroelements by KRAB-ZFP proteins"/>
</dbReference>
<dbReference type="Reactome" id="R-RNO-9843970">
    <property type="pathway name" value="Regulation of endogenous retroelements by the Human Silencing Hub (HUSH) complex"/>
</dbReference>
<dbReference type="PRO" id="PR:A9UMV8"/>
<dbReference type="Proteomes" id="UP000002494">
    <property type="component" value="Chromosome 4"/>
</dbReference>
<dbReference type="Proteomes" id="UP000234681">
    <property type="component" value="Chromosome 4"/>
</dbReference>
<dbReference type="Bgee" id="ENSRNOG00000033045">
    <property type="expression patterns" value="Expressed in duodenum and 19 other cell types or tissues"/>
</dbReference>
<dbReference type="GO" id="GO:0000786">
    <property type="term" value="C:nucleosome"/>
    <property type="evidence" value="ECO:0000318"/>
    <property type="project" value="GO_Central"/>
</dbReference>
<dbReference type="GO" id="GO:0005634">
    <property type="term" value="C:nucleus"/>
    <property type="evidence" value="ECO:0000318"/>
    <property type="project" value="GO_Central"/>
</dbReference>
<dbReference type="GO" id="GO:0003677">
    <property type="term" value="F:DNA binding"/>
    <property type="evidence" value="ECO:0007669"/>
    <property type="project" value="UniProtKB-KW"/>
</dbReference>
<dbReference type="GO" id="GO:0046982">
    <property type="term" value="F:protein heterodimerization activity"/>
    <property type="evidence" value="ECO:0007669"/>
    <property type="project" value="InterPro"/>
</dbReference>
<dbReference type="GO" id="GO:0030527">
    <property type="term" value="F:structural constituent of chromatin"/>
    <property type="evidence" value="ECO:0000318"/>
    <property type="project" value="GO_Central"/>
</dbReference>
<dbReference type="GO" id="GO:0031507">
    <property type="term" value="P:heterochromatin formation"/>
    <property type="evidence" value="ECO:0000318"/>
    <property type="project" value="GO_Central"/>
</dbReference>
<dbReference type="CDD" id="cd00074">
    <property type="entry name" value="HFD_H2A"/>
    <property type="match status" value="1"/>
</dbReference>
<dbReference type="FunFam" id="1.10.20.10:FF:000103">
    <property type="entry name" value="Histone H2A type 1"/>
    <property type="match status" value="1"/>
</dbReference>
<dbReference type="Gene3D" id="1.10.20.10">
    <property type="entry name" value="Histone, subunit A"/>
    <property type="match status" value="1"/>
</dbReference>
<dbReference type="InterPro" id="IPR009072">
    <property type="entry name" value="Histone-fold"/>
</dbReference>
<dbReference type="InterPro" id="IPR002119">
    <property type="entry name" value="Histone_H2A"/>
</dbReference>
<dbReference type="InterPro" id="IPR007125">
    <property type="entry name" value="Histone_H2A/H2B/H3"/>
</dbReference>
<dbReference type="InterPro" id="IPR032454">
    <property type="entry name" value="Histone_H2A_C"/>
</dbReference>
<dbReference type="InterPro" id="IPR032458">
    <property type="entry name" value="Histone_H2A_CS"/>
</dbReference>
<dbReference type="PANTHER" id="PTHR23430">
    <property type="entry name" value="HISTONE H2A"/>
    <property type="match status" value="1"/>
</dbReference>
<dbReference type="Pfam" id="PF00125">
    <property type="entry name" value="Histone"/>
    <property type="match status" value="1"/>
</dbReference>
<dbReference type="Pfam" id="PF16211">
    <property type="entry name" value="Histone_H2A_C"/>
    <property type="match status" value="1"/>
</dbReference>
<dbReference type="PRINTS" id="PR00620">
    <property type="entry name" value="HISTONEH2A"/>
</dbReference>
<dbReference type="SMART" id="SM00414">
    <property type="entry name" value="H2A"/>
    <property type="match status" value="1"/>
</dbReference>
<dbReference type="SUPFAM" id="SSF47113">
    <property type="entry name" value="Histone-fold"/>
    <property type="match status" value="1"/>
</dbReference>
<dbReference type="PROSITE" id="PS00046">
    <property type="entry name" value="HISTONE_H2A"/>
    <property type="match status" value="1"/>
</dbReference>